<protein>
    <recommendedName>
        <fullName>Dolichyl-phosphooligosaccharide-protein glycotransferase 1</fullName>
        <ecNumber evidence="5">2.4.99.21</ecNumber>
    </recommendedName>
    <alternativeName>
        <fullName>Archaeal glycosylation protein B</fullName>
        <shortName>AglB-L</shortName>
        <shortName>AglB-Long</shortName>
    </alternativeName>
    <alternativeName>
        <fullName>Oligosaccharyl transferase</fullName>
        <shortName>OST</shortName>
        <shortName>OTase</shortName>
    </alternativeName>
</protein>
<keyword id="KW-0002">3D-structure</keyword>
<keyword id="KW-1003">Cell membrane</keyword>
<keyword id="KW-0328">Glycosyltransferase</keyword>
<keyword id="KW-0460">Magnesium</keyword>
<keyword id="KW-0464">Manganese</keyword>
<keyword id="KW-0472">Membrane</keyword>
<keyword id="KW-0479">Metal-binding</keyword>
<keyword id="KW-1185">Reference proteome</keyword>
<keyword id="KW-0808">Transferase</keyword>
<keyword id="KW-0812">Transmembrane</keyword>
<keyword id="KW-1133">Transmembrane helix</keyword>
<reference key="1">
    <citation type="journal article" date="1999" name="Genetics">
        <title>Divergence of the hyperthermophilic archaea Pyrococcus furiosus and P. horikoshii inferred from complete genomic sequences.</title>
        <authorList>
            <person name="Maeder D.L."/>
            <person name="Weiss R.B."/>
            <person name="Dunn D.M."/>
            <person name="Cherry J.L."/>
            <person name="Gonzalez J.M."/>
            <person name="DiRuggiero J."/>
            <person name="Robb F.T."/>
        </authorList>
    </citation>
    <scope>NUCLEOTIDE SEQUENCE [LARGE SCALE GENOMIC DNA]</scope>
    <source>
        <strain>ATCC 43587 / DSM 3638 / JCM 8422 / Vc1</strain>
    </source>
</reference>
<reference key="2">
    <citation type="journal article" date="2016" name="J. Biol. Chem.">
        <title>Comparative analysis of archaeal lipid-linked oligosaccharides that serve as oligosaccharide donors for Asn glycosylation.</title>
        <authorList>
            <person name="Taguchi Y."/>
            <person name="Fujinami D."/>
            <person name="Kohda D."/>
        </authorList>
    </citation>
    <scope>COMPOSITION OF LIPID-LINKED OLIGOSACCHARIDE</scope>
</reference>
<reference evidence="8 9" key="3">
    <citation type="journal article" date="2008" name="EMBO J.">
        <title>Structure-guided identification of a new catalytic motif of oligosaccharyltransferase.</title>
        <authorList>
            <person name="Igura M."/>
            <person name="Maita N."/>
            <person name="Kamishikiryo J."/>
            <person name="Yamada M."/>
            <person name="Obita T."/>
            <person name="Maenaka K."/>
            <person name="Kohda D."/>
        </authorList>
    </citation>
    <scope>X-RAY CRYSTALLOGRAPHY (2.70 ANGSTROMS) OF 471-967</scope>
    <scope>FUNCTION</scope>
    <scope>CATALYTIC ACTIVITY</scope>
    <scope>COFACTOR</scope>
</reference>
<proteinExistence type="evidence at protein level"/>
<sequence length="967" mass="108585">MVKTQIKEKKKDEKVTIPLPGKIKTVLAFLVVLAFAAYGFYIRHLTAGKYFSDPDTFYHFEIYKLVLKEGLPRYYPMADAPFGSLIGEPLGLYILPAIFYKIISIFGYNELEAFLLWPPFVGFLSVIGVYLLGRKVLNEWAGMWGAIILSVLTANFSRTFSGNARGDGPFMMLFTFSAVLMLYYLTEENKNKKIIWGTLFVLLAGISTAAWNGSPFGLMVLLGFASFQTIILFIFGKINELREFIKEYYPAYLGILAISYLLTIPGIGKIGGFVRFAFEVFLGLVFLAIVMLYGGKYLNYSDKKHRFAVVAVIVIAGFAGAYIYVGPKLFTLMGGAYQSTQVYETVQELAKTDWGDVKVYYGVEKPNGIVFFLGLVGAMIVTARYLYKLFKDGRRPHEELFAITFYVMSIYLLWTAARFLFLASYAIALMSGVFAGYVLETVEKMKESIPIKAALGGVIAIMLLLIPLTHGPLLAQSAKSMRTTEIETSGWEDALKWLRENTPEYSTATSWWDYGYWIESSLLGQRRASADGGHARDRDHILALFLARDGNISEVDFESWELNYFLVYLNDWAKFNAISYLGGAITRREYNGDESGRGAVTTLLPLPRYGEKYVNLYAKVIVDVSNSSVKVTVGDRECDPLMVTFTPSGKTIKGTGTCSDGNAFPYVLHLTPTIGVLAYYKVATANFIKLAFGVPASTIPGFSDKLFSNFEPVYESGNVIVYRFTPFGIYKIEENINGTWKQVYNLTPGKHELKLYISAFGRDIENATLYIYAINNEKIIEKIKIAEISHMDYLNEYPIAVNVTLPNATSYRFVLVQKGPIGVLLDAPKVNGEIRSPTNILREGESGEIELKVGVDKDYTADLYLRATFIYLVRKSGKDNEDYDAAFEPQMDVFFITKIGENIQLKEGENTVKVRAELPEGVISSYKDELQRKYGDKLIIRGIRVEPVFIAEKEYLMLEVSASAPHH</sequence>
<organism>
    <name type="scientific">Pyrococcus furiosus (strain ATCC 43587 / DSM 3638 / JCM 8422 / Vc1)</name>
    <dbReference type="NCBI Taxonomy" id="186497"/>
    <lineage>
        <taxon>Archaea</taxon>
        <taxon>Methanobacteriati</taxon>
        <taxon>Methanobacteriota</taxon>
        <taxon>Thermococci</taxon>
        <taxon>Thermococcales</taxon>
        <taxon>Thermococcaceae</taxon>
        <taxon>Pyrococcus</taxon>
    </lineage>
</organism>
<evidence type="ECO:0000250" key="1">
    <source>
        <dbReference type="UniProtKB" id="B9KDD4"/>
    </source>
</evidence>
<evidence type="ECO:0000250" key="2">
    <source>
        <dbReference type="UniProtKB" id="O29867"/>
    </source>
</evidence>
<evidence type="ECO:0000250" key="3">
    <source>
        <dbReference type="UniProtKB" id="Q2EMT4"/>
    </source>
</evidence>
<evidence type="ECO:0000255" key="4"/>
<evidence type="ECO:0000269" key="5">
    <source>
    </source>
</evidence>
<evidence type="ECO:0000305" key="6"/>
<evidence type="ECO:0000305" key="7">
    <source>
    </source>
</evidence>
<evidence type="ECO:0007744" key="8">
    <source>
        <dbReference type="PDB" id="2ZAG"/>
    </source>
</evidence>
<evidence type="ECO:0007744" key="9">
    <source>
        <dbReference type="PDB" id="2ZAI"/>
    </source>
</evidence>
<evidence type="ECO:0007829" key="10">
    <source>
        <dbReference type="PDB" id="2ZAG"/>
    </source>
</evidence>
<evidence type="ECO:0007829" key="11">
    <source>
        <dbReference type="PDB" id="2ZAI"/>
    </source>
</evidence>
<name>AGLB1_PYRFU</name>
<gene>
    <name type="primary">aglB1</name>
    <name type="ordered locus">PF0156</name>
</gene>
<comment type="function">
    <text evidence="5">Oligosaccharyl transferase (OST) that catalyzes the initial transfer of a defined glycan (ManNAcXyl(2)GlcAMan(2)GalNAc in P.furiosus) from the lipid carrier dolichol-monophosphate to an asparagine residue within an Asn-X-Ser/Thr consensus motif in nascent polypeptide chains, the first step in protein N-glycosylation.</text>
</comment>
<comment type="catalytic activity">
    <reaction evidence="5">
        <text>an archaeal dolichyl phosphooligosaccharide + [protein]-L-asparagine = an archaeal dolichyl phosphate + a glycoprotein with the oligosaccharide chain attached by N-beta-D-glycosyl linkage to a protein L-asparagine.</text>
        <dbReference type="EC" id="2.4.99.21"/>
    </reaction>
</comment>
<comment type="cofactor">
    <cofactor evidence="5">
        <name>Mn(2+)</name>
        <dbReference type="ChEBI" id="CHEBI:29035"/>
    </cofactor>
    <cofactor evidence="5">
        <name>Mg(2+)</name>
        <dbReference type="ChEBI" id="CHEBI:18420"/>
    </cofactor>
</comment>
<comment type="pathway">
    <text evidence="7">Protein modification; protein glycosylation.</text>
</comment>
<comment type="subcellular location">
    <subcellularLocation>
        <location evidence="3">Cell membrane</location>
        <topology evidence="3">Multi-pass membrane protein</topology>
    </subcellularLocation>
</comment>
<comment type="domain">
    <text evidence="2">Despite low primary sequence conservation between eukaryotic catalytic subunits and bacterial and archaeal single subunit OSTs (ssOST), structural comparison revealed several common motifs at spatially equivalent positions, like the DXD motif 1 on the external loop 1 and the DXD motif 2 on the external loop 2 involved in binding of the metal ion cofactor and the carboxamide group of the acceptor asparagine, the conserved Glu residue of the TIXE/SVSE motif on the external loop 5 involved in catalysis, as well as the WWDYG and the DK/MI motifs in the globular domain that define the binding pocket for the +2 Ser/Thr of the acceptor sequon. In bacterial ssOSTs, an Arg residue was found to interact with a negatively charged side chain at the -2 position of the sequon. This Arg is conserved in bacterial enzymes and correlates with an extended sequon requirement (Asp-X-Asn-X-Ser/Thr) for bacterial N-glycosylation.</text>
</comment>
<comment type="similarity">
    <text evidence="6">Belongs to the STT3 family.</text>
</comment>
<dbReference type="EC" id="2.4.99.21" evidence="5"/>
<dbReference type="EMBL" id="AE009950">
    <property type="protein sequence ID" value="AAL80280.1"/>
    <property type="molecule type" value="Genomic_DNA"/>
</dbReference>
<dbReference type="PDB" id="2ZAG">
    <property type="method" value="X-ray"/>
    <property type="resolution" value="3.00 A"/>
    <property type="chains" value="A/B/C/D=471-967"/>
</dbReference>
<dbReference type="PDB" id="2ZAI">
    <property type="method" value="X-ray"/>
    <property type="resolution" value="2.70 A"/>
    <property type="chains" value="A/B/C/D=471-967"/>
</dbReference>
<dbReference type="PDBsum" id="2ZAG"/>
<dbReference type="PDBsum" id="2ZAI"/>
<dbReference type="SMR" id="Q8U4D2"/>
<dbReference type="STRING" id="186497.PF0156"/>
<dbReference type="CAZy" id="GT66">
    <property type="family name" value="Glycosyltransferase Family 66"/>
</dbReference>
<dbReference type="PaxDb" id="186497-PF0156"/>
<dbReference type="KEGG" id="pfu:PF0156"/>
<dbReference type="PATRIC" id="fig|186497.12.peg.162"/>
<dbReference type="eggNOG" id="arCOG02044">
    <property type="taxonomic scope" value="Archaea"/>
</dbReference>
<dbReference type="HOGENOM" id="CLU_304340_0_0_2"/>
<dbReference type="PhylomeDB" id="Q8U4D2"/>
<dbReference type="BRENDA" id="2.4.99.18">
    <property type="organism ID" value="5243"/>
</dbReference>
<dbReference type="UniPathway" id="UPA00378"/>
<dbReference type="EvolutionaryTrace" id="Q8U4D2"/>
<dbReference type="Proteomes" id="UP000001013">
    <property type="component" value="Chromosome"/>
</dbReference>
<dbReference type="GO" id="GO:0005886">
    <property type="term" value="C:plasma membrane"/>
    <property type="evidence" value="ECO:0007669"/>
    <property type="project" value="UniProtKB-SubCell"/>
</dbReference>
<dbReference type="GO" id="GO:0046872">
    <property type="term" value="F:metal ion binding"/>
    <property type="evidence" value="ECO:0007669"/>
    <property type="project" value="UniProtKB-KW"/>
</dbReference>
<dbReference type="GO" id="GO:0004576">
    <property type="term" value="F:oligosaccharyl transferase activity"/>
    <property type="evidence" value="ECO:0007669"/>
    <property type="project" value="InterPro"/>
</dbReference>
<dbReference type="GO" id="GO:0006486">
    <property type="term" value="P:protein glycosylation"/>
    <property type="evidence" value="ECO:0007669"/>
    <property type="project" value="UniProtKB-UniPathway"/>
</dbReference>
<dbReference type="Gene3D" id="2.40.128.390">
    <property type="match status" value="1"/>
</dbReference>
<dbReference type="Gene3D" id="2.60.40.3020">
    <property type="match status" value="1"/>
</dbReference>
<dbReference type="Gene3D" id="2.60.40.3030">
    <property type="match status" value="1"/>
</dbReference>
<dbReference type="Gene3D" id="3.40.50.12610">
    <property type="match status" value="1"/>
</dbReference>
<dbReference type="InterPro" id="IPR003674">
    <property type="entry name" value="Oligo_trans_STT3"/>
</dbReference>
<dbReference type="InterPro" id="IPR041530">
    <property type="entry name" value="OST_IS"/>
</dbReference>
<dbReference type="InterPro" id="IPR048858">
    <property type="entry name" value="OST_P1"/>
</dbReference>
<dbReference type="InterPro" id="IPR041152">
    <property type="entry name" value="OST_P2"/>
</dbReference>
<dbReference type="InterPro" id="IPR048307">
    <property type="entry name" value="STT3_N"/>
</dbReference>
<dbReference type="PANTHER" id="PTHR13872">
    <property type="entry name" value="DOLICHYL-DIPHOSPHOOLIGOSACCHARIDE--PROTEIN GLYCOSYLTRANSFERASE SUBUNIT"/>
    <property type="match status" value="1"/>
</dbReference>
<dbReference type="PANTHER" id="PTHR13872:SF1">
    <property type="entry name" value="DOLICHYL-DIPHOSPHOOLIGOSACCHARIDE--PROTEIN GLYCOSYLTRANSFERASE SUBUNIT STT3B"/>
    <property type="match status" value="1"/>
</dbReference>
<dbReference type="Pfam" id="PF18246">
    <property type="entry name" value="OST_IS"/>
    <property type="match status" value="1"/>
</dbReference>
<dbReference type="Pfam" id="PF21618">
    <property type="entry name" value="OST_P1"/>
    <property type="match status" value="1"/>
</dbReference>
<dbReference type="Pfam" id="PF18235">
    <property type="entry name" value="OST_P2"/>
    <property type="match status" value="1"/>
</dbReference>
<dbReference type="Pfam" id="PF02516">
    <property type="entry name" value="STT3"/>
    <property type="match status" value="1"/>
</dbReference>
<feature type="chain" id="PRO_0000445590" description="Dolichyl-phosphooligosaccharide-protein glycotransferase 1">
    <location>
        <begin position="1"/>
        <end position="967"/>
    </location>
</feature>
<feature type="topological domain" description="Cytoplasmic" evidence="6">
    <location>
        <begin position="1"/>
        <end position="21"/>
    </location>
</feature>
<feature type="transmembrane region" description="Helical" evidence="4">
    <location>
        <begin position="22"/>
        <end position="42"/>
    </location>
</feature>
<feature type="topological domain" description="Extracellular" evidence="6">
    <location>
        <begin position="43"/>
        <end position="112"/>
    </location>
</feature>
<feature type="transmembrane region" description="Helical" evidence="4">
    <location>
        <begin position="113"/>
        <end position="133"/>
    </location>
</feature>
<feature type="topological domain" description="Cytoplasmic" evidence="6">
    <location>
        <begin position="134"/>
        <end position="135"/>
    </location>
</feature>
<feature type="transmembrane region" description="Helical" evidence="4">
    <location>
        <begin position="136"/>
        <end position="156"/>
    </location>
</feature>
<feature type="topological domain" description="Extracellular" evidence="6">
    <location>
        <begin position="157"/>
        <end position="165"/>
    </location>
</feature>
<feature type="transmembrane region" description="Helical" evidence="4">
    <location>
        <begin position="166"/>
        <end position="186"/>
    </location>
</feature>
<feature type="topological domain" description="Cytoplasmic" evidence="6">
    <location>
        <begin position="187"/>
        <end position="193"/>
    </location>
</feature>
<feature type="transmembrane region" description="Helical" evidence="4">
    <location>
        <begin position="194"/>
        <end position="214"/>
    </location>
</feature>
<feature type="topological domain" description="Extracellular" evidence="6">
    <location>
        <position position="215"/>
    </location>
</feature>
<feature type="transmembrane region" description="Helical" evidence="4">
    <location>
        <begin position="216"/>
        <end position="236"/>
    </location>
</feature>
<feature type="topological domain" description="Cytoplasmic" evidence="6">
    <location>
        <begin position="237"/>
        <end position="247"/>
    </location>
</feature>
<feature type="transmembrane region" description="Helical" evidence="4">
    <location>
        <begin position="248"/>
        <end position="268"/>
    </location>
</feature>
<feature type="topological domain" description="Extracellular" evidence="6">
    <location>
        <position position="269"/>
    </location>
</feature>
<feature type="transmembrane region" description="Helical" evidence="4">
    <location>
        <begin position="270"/>
        <end position="290"/>
    </location>
</feature>
<feature type="topological domain" description="Cytoplasmic" evidence="6">
    <location>
        <begin position="291"/>
        <end position="306"/>
    </location>
</feature>
<feature type="transmembrane region" description="Helical" evidence="4">
    <location>
        <begin position="307"/>
        <end position="327"/>
    </location>
</feature>
<feature type="topological domain" description="Extracellular" evidence="6">
    <location>
        <begin position="328"/>
        <end position="360"/>
    </location>
</feature>
<feature type="transmembrane region" description="Helical" evidence="4">
    <location>
        <begin position="361"/>
        <end position="381"/>
    </location>
</feature>
<feature type="topological domain" description="Cytoplasmic" evidence="6">
    <location>
        <begin position="382"/>
        <end position="396"/>
    </location>
</feature>
<feature type="transmembrane region" description="Helical" evidence="4">
    <location>
        <begin position="397"/>
        <end position="417"/>
    </location>
</feature>
<feature type="topological domain" description="Extracellular" evidence="6">
    <location>
        <position position="418"/>
    </location>
</feature>
<feature type="transmembrane region" description="Helical" evidence="4">
    <location>
        <begin position="419"/>
        <end position="439"/>
    </location>
</feature>
<feature type="topological domain" description="Cytoplasmic" evidence="6">
    <location>
        <begin position="440"/>
        <end position="453"/>
    </location>
</feature>
<feature type="transmembrane region" description="Helical" evidence="4">
    <location>
        <begin position="454"/>
        <end position="474"/>
    </location>
</feature>
<feature type="topological domain" description="Extracellular" evidence="6">
    <location>
        <begin position="475"/>
        <end position="967"/>
    </location>
</feature>
<feature type="region of interest" description="Interacts with target acceptor peptide in protein substrate" evidence="2">
    <location>
        <begin position="511"/>
        <end position="513"/>
    </location>
</feature>
<feature type="short sequence motif" description="DXD motif 1" evidence="2">
    <location>
        <begin position="53"/>
        <end position="55"/>
    </location>
</feature>
<feature type="short sequence motif" description="DXD motif 2" evidence="2">
    <location>
        <begin position="165"/>
        <end position="167"/>
    </location>
</feature>
<feature type="short sequence motif" description="TIXE motif" evidence="2">
    <location>
        <begin position="345"/>
        <end position="348"/>
    </location>
</feature>
<feature type="short sequence motif" description="WWDYG motif" evidence="7">
    <location>
        <begin position="511"/>
        <end position="515"/>
    </location>
</feature>
<feature type="short sequence motif" description="DK motif" evidence="7">
    <location>
        <begin position="571"/>
        <end position="578"/>
    </location>
</feature>
<feature type="binding site" evidence="2">
    <location>
        <position position="55"/>
    </location>
    <ligand>
        <name>Mn(2+)</name>
        <dbReference type="ChEBI" id="CHEBI:29035"/>
    </ligand>
</feature>
<feature type="binding site" evidence="2">
    <location>
        <position position="165"/>
    </location>
    <ligand>
        <name>Mn(2+)</name>
        <dbReference type="ChEBI" id="CHEBI:29035"/>
    </ligand>
</feature>
<feature type="binding site" evidence="2">
    <location>
        <position position="167"/>
    </location>
    <ligand>
        <name>Mn(2+)</name>
        <dbReference type="ChEBI" id="CHEBI:29035"/>
    </ligand>
</feature>
<feature type="binding site" evidence="2">
    <location>
        <position position="418"/>
    </location>
    <ligand>
        <name>a glycophospholipid</name>
        <dbReference type="ChEBI" id="CHEBI:24397"/>
        <note>archaeal dolichyl phosphooligosaccharide</note>
    </ligand>
</feature>
<feature type="binding site" evidence="1">
    <location>
        <position position="516"/>
    </location>
    <ligand>
        <name>a glycophospholipid</name>
        <dbReference type="ChEBI" id="CHEBI:24397"/>
        <note>archaeal dolichyl phosphooligosaccharide</note>
    </ligand>
</feature>
<feature type="site" description="Interacts with target acceptor peptide in protein substrate" evidence="2">
    <location>
        <position position="55"/>
    </location>
</feature>
<feature type="site" description="Important for catalytic activity" evidence="1">
    <location>
        <position position="158"/>
    </location>
</feature>
<feature type="site" description="Interacts with target acceptor peptide in protein substrate" evidence="2">
    <location>
        <position position="348"/>
    </location>
</feature>
<feature type="site" description="Interacts with target acceptor peptide in protein substrate" evidence="2">
    <location>
        <position position="574"/>
    </location>
</feature>
<feature type="helix" evidence="11">
    <location>
        <begin position="491"/>
        <end position="501"/>
    </location>
</feature>
<feature type="strand" evidence="11">
    <location>
        <begin position="508"/>
        <end position="510"/>
    </location>
</feature>
<feature type="helix" evidence="11">
    <location>
        <begin position="511"/>
        <end position="513"/>
    </location>
</feature>
<feature type="helix" evidence="11">
    <location>
        <begin position="514"/>
        <end position="519"/>
    </location>
</feature>
<feature type="turn" evidence="11">
    <location>
        <begin position="520"/>
        <end position="523"/>
    </location>
</feature>
<feature type="strand" evidence="10">
    <location>
        <begin position="527"/>
        <end position="529"/>
    </location>
</feature>
<feature type="helix" evidence="11">
    <location>
        <begin position="537"/>
        <end position="547"/>
    </location>
</feature>
<feature type="helix" evidence="11">
    <location>
        <begin position="551"/>
        <end position="553"/>
    </location>
</feature>
<feature type="helix" evidence="11">
    <location>
        <begin position="557"/>
        <end position="560"/>
    </location>
</feature>
<feature type="strand" evidence="11">
    <location>
        <begin position="564"/>
        <end position="568"/>
    </location>
</feature>
<feature type="helix" evidence="11">
    <location>
        <begin position="569"/>
        <end position="574"/>
    </location>
</feature>
<feature type="helix" evidence="11">
    <location>
        <begin position="575"/>
        <end position="581"/>
    </location>
</feature>
<feature type="helix" evidence="11">
    <location>
        <begin position="587"/>
        <end position="591"/>
    </location>
</feature>
<feature type="strand" evidence="11">
    <location>
        <begin position="603"/>
        <end position="609"/>
    </location>
</feature>
<feature type="strand" evidence="11">
    <location>
        <begin position="612"/>
        <end position="615"/>
    </location>
</feature>
<feature type="turn" evidence="11">
    <location>
        <begin position="616"/>
        <end position="619"/>
    </location>
</feature>
<feature type="strand" evidence="11">
    <location>
        <begin position="620"/>
        <end position="623"/>
    </location>
</feature>
<feature type="turn" evidence="11">
    <location>
        <begin position="625"/>
        <end position="628"/>
    </location>
</feature>
<feature type="strand" evidence="11">
    <location>
        <begin position="630"/>
        <end position="633"/>
    </location>
</feature>
<feature type="strand" evidence="11">
    <location>
        <begin position="636"/>
        <end position="639"/>
    </location>
</feature>
<feature type="strand" evidence="11">
    <location>
        <begin position="641"/>
        <end position="648"/>
    </location>
</feature>
<feature type="strand" evidence="11">
    <location>
        <begin position="651"/>
        <end position="653"/>
    </location>
</feature>
<feature type="strand" evidence="11">
    <location>
        <begin position="666"/>
        <end position="670"/>
    </location>
</feature>
<feature type="strand" evidence="11">
    <location>
        <begin position="672"/>
        <end position="679"/>
    </location>
</feature>
<feature type="helix" evidence="11">
    <location>
        <begin position="680"/>
        <end position="682"/>
    </location>
</feature>
<feature type="helix" evidence="11">
    <location>
        <begin position="686"/>
        <end position="692"/>
    </location>
</feature>
<feature type="helix" evidence="11">
    <location>
        <begin position="702"/>
        <end position="709"/>
    </location>
</feature>
<feature type="strand" evidence="11">
    <location>
        <begin position="710"/>
        <end position="715"/>
    </location>
</feature>
<feature type="strand" evidence="11">
    <location>
        <begin position="717"/>
        <end position="724"/>
    </location>
</feature>
<feature type="strand" evidence="11">
    <location>
        <begin position="726"/>
        <end position="738"/>
    </location>
</feature>
<feature type="strand" evidence="11">
    <location>
        <begin position="740"/>
        <end position="744"/>
    </location>
</feature>
<feature type="strand" evidence="11">
    <location>
        <begin position="748"/>
        <end position="759"/>
    </location>
</feature>
<feature type="strand" evidence="11">
    <location>
        <begin position="764"/>
        <end position="777"/>
    </location>
</feature>
<feature type="strand" evidence="11">
    <location>
        <begin position="779"/>
        <end position="792"/>
    </location>
</feature>
<feature type="strand" evidence="11">
    <location>
        <begin position="799"/>
        <end position="805"/>
    </location>
</feature>
<feature type="strand" evidence="11">
    <location>
        <begin position="809"/>
        <end position="821"/>
    </location>
</feature>
<feature type="strand" evidence="11">
    <location>
        <begin position="846"/>
        <end position="857"/>
    </location>
</feature>
<feature type="strand" evidence="11">
    <location>
        <begin position="859"/>
        <end position="874"/>
    </location>
</feature>
<feature type="strand" evidence="11">
    <location>
        <begin position="876"/>
        <end position="879"/>
    </location>
</feature>
<feature type="strand" evidence="11">
    <location>
        <begin position="887"/>
        <end position="905"/>
    </location>
</feature>
<feature type="strand" evidence="11">
    <location>
        <begin position="907"/>
        <end position="917"/>
    </location>
</feature>
<feature type="helix" evidence="11">
    <location>
        <begin position="922"/>
        <end position="934"/>
    </location>
</feature>
<feature type="helix" evidence="11">
    <location>
        <begin position="935"/>
        <end position="937"/>
    </location>
</feature>
<feature type="strand" evidence="11">
    <location>
        <begin position="938"/>
        <end position="962"/>
    </location>
</feature>
<accession>Q8U4D2</accession>